<name>ADIP_ORYLA</name>
<proteinExistence type="inferred from homology"/>
<dbReference type="SMR" id="H2MTR9"/>
<dbReference type="FunCoup" id="H2MTR9">
    <property type="interactions" value="206"/>
</dbReference>
<dbReference type="STRING" id="8090.ENSORLP00000022176"/>
<dbReference type="eggNOG" id="ENOG502QQJF">
    <property type="taxonomic scope" value="Eukaryota"/>
</dbReference>
<dbReference type="HOGENOM" id="CLU_031049_0_0_1"/>
<dbReference type="InParanoid" id="H2MTR9"/>
<dbReference type="OMA" id="SSTCIEA"/>
<dbReference type="TreeFam" id="TF332889"/>
<dbReference type="Proteomes" id="UP000001038">
    <property type="component" value="Unplaced"/>
</dbReference>
<dbReference type="Proteomes" id="UP000265180">
    <property type="component" value="Chromosome 9"/>
</dbReference>
<dbReference type="Proteomes" id="UP000265200">
    <property type="component" value="Chromosome 9"/>
</dbReference>
<dbReference type="GO" id="GO:0005912">
    <property type="term" value="C:adherens junction"/>
    <property type="evidence" value="ECO:0007669"/>
    <property type="project" value="UniProtKB-SubCell"/>
</dbReference>
<dbReference type="GO" id="GO:0034451">
    <property type="term" value="C:centriolar satellite"/>
    <property type="evidence" value="ECO:0000318"/>
    <property type="project" value="GO_Central"/>
</dbReference>
<dbReference type="GO" id="GO:0036064">
    <property type="term" value="C:ciliary basal body"/>
    <property type="evidence" value="ECO:0000318"/>
    <property type="project" value="GO_Central"/>
</dbReference>
<dbReference type="GO" id="GO:0005737">
    <property type="term" value="C:cytoplasm"/>
    <property type="evidence" value="ECO:0007669"/>
    <property type="project" value="UniProtKB-KW"/>
</dbReference>
<dbReference type="GO" id="GO:0005874">
    <property type="term" value="C:microtubule"/>
    <property type="evidence" value="ECO:0007669"/>
    <property type="project" value="UniProtKB-KW"/>
</dbReference>
<dbReference type="GO" id="GO:0007155">
    <property type="term" value="P:cell adhesion"/>
    <property type="evidence" value="ECO:0007669"/>
    <property type="project" value="UniProtKB-KW"/>
</dbReference>
<dbReference type="GO" id="GO:0035735">
    <property type="term" value="P:intraciliary transport involved in cilium assembly"/>
    <property type="evidence" value="ECO:0000318"/>
    <property type="project" value="GO_Central"/>
</dbReference>
<dbReference type="InterPro" id="IPR052300">
    <property type="entry name" value="Adhesion_Centrosome_assoc"/>
</dbReference>
<dbReference type="InterPro" id="IPR021622">
    <property type="entry name" value="Afadin/alpha-actinin-bd"/>
</dbReference>
<dbReference type="PANTHER" id="PTHR46507">
    <property type="entry name" value="AFADIN- AND ALPHA-ACTININ-BINDING PROTEIN"/>
    <property type="match status" value="1"/>
</dbReference>
<dbReference type="PANTHER" id="PTHR46507:SF2">
    <property type="entry name" value="AFADIN- AND ALPHA-ACTININ-BINDING PROTEIN"/>
    <property type="match status" value="1"/>
</dbReference>
<dbReference type="Pfam" id="PF11559">
    <property type="entry name" value="ADIP"/>
    <property type="match status" value="1"/>
</dbReference>
<accession>H2MTR9</accession>
<gene>
    <name type="primary">ssx2ip</name>
</gene>
<feature type="chain" id="PRO_0000425546" description="Afadin- and alpha-actinin-binding protein">
    <location>
        <begin position="1"/>
        <end position="583"/>
    </location>
</feature>
<feature type="region of interest" description="Disordered" evidence="3">
    <location>
        <begin position="285"/>
        <end position="328"/>
    </location>
</feature>
<feature type="region of interest" description="Disordered" evidence="3">
    <location>
        <begin position="480"/>
        <end position="527"/>
    </location>
</feature>
<feature type="coiled-coil region" evidence="2">
    <location>
        <begin position="108"/>
        <end position="220"/>
    </location>
</feature>
<feature type="coiled-coil region" evidence="2">
    <location>
        <begin position="255"/>
        <end position="333"/>
    </location>
</feature>
<feature type="coiled-coil region" evidence="2">
    <location>
        <begin position="420"/>
        <end position="453"/>
    </location>
</feature>
<feature type="compositionally biased region" description="Basic and acidic residues" evidence="3">
    <location>
        <begin position="305"/>
        <end position="328"/>
    </location>
</feature>
<feature type="compositionally biased region" description="Polar residues" evidence="3">
    <location>
        <begin position="484"/>
        <end position="494"/>
    </location>
</feature>
<feature type="compositionally biased region" description="Low complexity" evidence="3">
    <location>
        <begin position="504"/>
        <end position="515"/>
    </location>
</feature>
<feature type="compositionally biased region" description="Polar residues" evidence="3">
    <location>
        <begin position="516"/>
        <end position="527"/>
    </location>
</feature>
<organism>
    <name type="scientific">Oryzias latipes</name>
    <name type="common">Japanese rice fish</name>
    <name type="synonym">Japanese killifish</name>
    <dbReference type="NCBI Taxonomy" id="8090"/>
    <lineage>
        <taxon>Eukaryota</taxon>
        <taxon>Metazoa</taxon>
        <taxon>Chordata</taxon>
        <taxon>Craniata</taxon>
        <taxon>Vertebrata</taxon>
        <taxon>Euteleostomi</taxon>
        <taxon>Actinopterygii</taxon>
        <taxon>Neopterygii</taxon>
        <taxon>Teleostei</taxon>
        <taxon>Neoteleostei</taxon>
        <taxon>Acanthomorphata</taxon>
        <taxon>Ovalentaria</taxon>
        <taxon>Atherinomorphae</taxon>
        <taxon>Beloniformes</taxon>
        <taxon>Adrianichthyidae</taxon>
        <taxon>Oryziinae</taxon>
        <taxon>Oryzias</taxon>
    </lineage>
</organism>
<evidence type="ECO:0000250" key="1"/>
<evidence type="ECO:0000255" key="2"/>
<evidence type="ECO:0000256" key="3">
    <source>
        <dbReference type="SAM" id="MobiDB-lite"/>
    </source>
</evidence>
<evidence type="ECO:0000269" key="4">
    <source>
    </source>
</evidence>
<evidence type="ECO:0000305" key="5"/>
<sequence>MGDWGLTETSMDNYEISILSHVAMSPSRHNNLMSAYSLPSSKSSYSVISAFCTEDNIPQCISYINQELGSLGLAAHIQADPPGRASLNAAPALNAMYELLQIHRRSMNNVEELEKEQLKKTSTLEHMQTSNSRLKDQLELSIREKSGLHETERQLQLKLKTLQSCLKTEKDEVQKLQSIIASRASQYSHDAKRKEREAAKLKERLSQLLVDRKDKKLAIEMLNSVGRSDGKRSHWKTAKATASREAEMYKSLLSDYEASQRALMLENAELQKVLQQMKKEMMHILSPCPPLNRGGSAEESQELGDSDREERSAETSRETLDQSCEHAREQLTNSIRQQWRKLRNHVQKLDNQASLVQNQPPSNAEVIPLETHEHEVERMRLEVQQCKEFIHAQQQLLQQQLNTSFDDETAALLNGCYTLEEKERLKEEWRLFDEQKRNFEKERKNFTEAAIRLGREKRAFEEDRAAWLKHQFLSMTPFADRMRSSSSDGQSALSVKSEPEIRTSSSKAPPVKSSAYTTFSTPKSSKSAAVPSTIDVCRTLRLIPDYRESSATEDEESWLKSKSKVCSSDLSIFSLDEDKNPLT</sequence>
<protein>
    <recommendedName>
        <fullName>Afadin- and alpha-actinin-binding protein</fullName>
        <shortName>ADIP</shortName>
    </recommendedName>
    <alternativeName>
        <fullName>Afadin DIL domain-interacting protein</fullName>
    </alternativeName>
    <alternativeName>
        <fullName>SSX2-interacting protein</fullName>
    </alternativeName>
</protein>
<reference key="1">
    <citation type="journal article" date="2007" name="Nature">
        <title>The medaka draft genome and insights into vertebrate genome evolution.</title>
        <authorList>
            <person name="Kasahara M."/>
            <person name="Naruse K."/>
            <person name="Sasaki S."/>
            <person name="Nakatani Y."/>
            <person name="Qu W."/>
            <person name="Ahsan B."/>
            <person name="Yamada T."/>
            <person name="Nagayasu Y."/>
            <person name="Doi K."/>
            <person name="Kasai Y."/>
            <person name="Jindo T."/>
            <person name="Kobayashi D."/>
            <person name="Shimada A."/>
            <person name="Toyoda A."/>
            <person name="Kuroki Y."/>
            <person name="Fujiyama A."/>
            <person name="Sasaki T."/>
            <person name="Shimizu A."/>
            <person name="Asakawa S."/>
            <person name="Shimizu N."/>
            <person name="Hashimoto S."/>
            <person name="Yang J."/>
            <person name="Lee Y."/>
            <person name="Matsushima K."/>
            <person name="Sugano S."/>
            <person name="Sakaizumi M."/>
            <person name="Narita T."/>
            <person name="Ohishi K."/>
            <person name="Haga S."/>
            <person name="Ohta F."/>
            <person name="Nomoto H."/>
            <person name="Nogata K."/>
            <person name="Morishita T."/>
            <person name="Endo T."/>
            <person name="Shin-I T."/>
            <person name="Takeda H."/>
            <person name="Morishita S."/>
            <person name="Kohara Y."/>
        </authorList>
    </citation>
    <scope>NUCLEOTIDE SEQUENCE [LARGE SCALE GENOMIC DNA]</scope>
    <source>
        <strain>Hd-rR</strain>
    </source>
</reference>
<reference key="2">
    <citation type="journal article" date="2013" name="J. Cell Biol.">
        <title>The centriolar satellite protein SSX2IP promotes centrosome maturation.</title>
        <authorList>
            <person name="Barenz F."/>
            <person name="Inoue D."/>
            <person name="Yokoyama H."/>
            <person name="Tegha-Dunghu J."/>
            <person name="Freiss S."/>
            <person name="Draeger S."/>
            <person name="Mayilo D."/>
            <person name="Cado I."/>
            <person name="Merker S."/>
            <person name="Klinger M."/>
            <person name="Hoeckendorf B."/>
            <person name="Pilz S."/>
            <person name="Hupfeld K."/>
            <person name="Steinbeisser H."/>
            <person name="Lorenz H."/>
            <person name="Ruppert T."/>
            <person name="Wittbrodt J."/>
            <person name="Gruss O.J."/>
        </authorList>
    </citation>
    <scope>FUNCTION</scope>
    <scope>SUBCELLULAR LOCATION</scope>
</reference>
<keyword id="KW-0130">Cell adhesion</keyword>
<keyword id="KW-0965">Cell junction</keyword>
<keyword id="KW-0175">Coiled coil</keyword>
<keyword id="KW-0963">Cytoplasm</keyword>
<keyword id="KW-0206">Cytoskeleton</keyword>
<keyword id="KW-0493">Microtubule</keyword>
<keyword id="KW-1185">Reference proteome</keyword>
<comment type="function">
    <text evidence="1 4">Belongs to an adhesion system, which plays a role in the organization of homotypic, interneuronal and heterotypic cell-cell adherens junctions (AJs). Involved in cell movement (By similarity). Acts as a centrosome maturation factor, probably by maintaining the integrity of the pericentriolar material and proper microtubule nucleation at mitotic spindle poles.</text>
</comment>
<comment type="subcellular location">
    <subcellularLocation>
        <location evidence="1">Cell junction</location>
        <location evidence="1">Adherens junction</location>
    </subcellularLocation>
    <subcellularLocation>
        <location evidence="4">Cytoplasm</location>
        <location evidence="4">Cytoskeleton</location>
        <location evidence="4">Microtubule organizing center</location>
        <location evidence="4">Centrosome</location>
        <location evidence="4">Centriolar satellite</location>
    </subcellularLocation>
</comment>
<comment type="similarity">
    <text evidence="5">Belongs to the ADIP family.</text>
</comment>